<protein>
    <recommendedName>
        <fullName evidence="1">Lipoyl synthase</fullName>
        <ecNumber evidence="1">2.8.1.8</ecNumber>
    </recommendedName>
    <alternativeName>
        <fullName evidence="1">Lip-syn</fullName>
        <shortName evidence="1">LS</shortName>
    </alternativeName>
    <alternativeName>
        <fullName evidence="1">Lipoate synthase</fullName>
    </alternativeName>
    <alternativeName>
        <fullName evidence="1">Lipoic acid synthase</fullName>
    </alternativeName>
    <alternativeName>
        <fullName evidence="1">Sulfur insertion protein LipA</fullName>
    </alternativeName>
</protein>
<feature type="chain" id="PRO_1000099587" description="Lipoyl synthase">
    <location>
        <begin position="1"/>
        <end position="321"/>
    </location>
</feature>
<feature type="domain" description="Radical SAM core" evidence="2">
    <location>
        <begin position="80"/>
        <end position="297"/>
    </location>
</feature>
<feature type="binding site" evidence="1">
    <location>
        <position position="68"/>
    </location>
    <ligand>
        <name>[4Fe-4S] cluster</name>
        <dbReference type="ChEBI" id="CHEBI:49883"/>
        <label>1</label>
    </ligand>
</feature>
<feature type="binding site" evidence="1">
    <location>
        <position position="73"/>
    </location>
    <ligand>
        <name>[4Fe-4S] cluster</name>
        <dbReference type="ChEBI" id="CHEBI:49883"/>
        <label>1</label>
    </ligand>
</feature>
<feature type="binding site" evidence="1">
    <location>
        <position position="79"/>
    </location>
    <ligand>
        <name>[4Fe-4S] cluster</name>
        <dbReference type="ChEBI" id="CHEBI:49883"/>
        <label>1</label>
    </ligand>
</feature>
<feature type="binding site" evidence="1">
    <location>
        <position position="94"/>
    </location>
    <ligand>
        <name>[4Fe-4S] cluster</name>
        <dbReference type="ChEBI" id="CHEBI:49883"/>
        <label>2</label>
        <note>4Fe-4S-S-AdoMet</note>
    </ligand>
</feature>
<feature type="binding site" evidence="1">
    <location>
        <position position="98"/>
    </location>
    <ligand>
        <name>[4Fe-4S] cluster</name>
        <dbReference type="ChEBI" id="CHEBI:49883"/>
        <label>2</label>
        <note>4Fe-4S-S-AdoMet</note>
    </ligand>
</feature>
<feature type="binding site" evidence="1">
    <location>
        <position position="101"/>
    </location>
    <ligand>
        <name>[4Fe-4S] cluster</name>
        <dbReference type="ChEBI" id="CHEBI:49883"/>
        <label>2</label>
        <note>4Fe-4S-S-AdoMet</note>
    </ligand>
</feature>
<feature type="binding site" evidence="1">
    <location>
        <position position="308"/>
    </location>
    <ligand>
        <name>[4Fe-4S] cluster</name>
        <dbReference type="ChEBI" id="CHEBI:49883"/>
        <label>1</label>
    </ligand>
</feature>
<dbReference type="EC" id="2.8.1.8" evidence="1"/>
<dbReference type="EMBL" id="FM178379">
    <property type="protein sequence ID" value="CAQ78664.1"/>
    <property type="molecule type" value="Genomic_DNA"/>
</dbReference>
<dbReference type="RefSeq" id="WP_012549743.1">
    <property type="nucleotide sequence ID" value="NC_011312.1"/>
</dbReference>
<dbReference type="SMR" id="B6EIF3"/>
<dbReference type="KEGG" id="vsa:VSAL_I0979"/>
<dbReference type="eggNOG" id="COG0320">
    <property type="taxonomic scope" value="Bacteria"/>
</dbReference>
<dbReference type="HOGENOM" id="CLU_033144_2_1_6"/>
<dbReference type="UniPathway" id="UPA00538">
    <property type="reaction ID" value="UER00593"/>
</dbReference>
<dbReference type="Proteomes" id="UP000001730">
    <property type="component" value="Chromosome 1"/>
</dbReference>
<dbReference type="GO" id="GO:0005737">
    <property type="term" value="C:cytoplasm"/>
    <property type="evidence" value="ECO:0007669"/>
    <property type="project" value="UniProtKB-SubCell"/>
</dbReference>
<dbReference type="GO" id="GO:0051539">
    <property type="term" value="F:4 iron, 4 sulfur cluster binding"/>
    <property type="evidence" value="ECO:0007669"/>
    <property type="project" value="UniProtKB-UniRule"/>
</dbReference>
<dbReference type="GO" id="GO:0016992">
    <property type="term" value="F:lipoate synthase activity"/>
    <property type="evidence" value="ECO:0007669"/>
    <property type="project" value="UniProtKB-UniRule"/>
</dbReference>
<dbReference type="GO" id="GO:0046872">
    <property type="term" value="F:metal ion binding"/>
    <property type="evidence" value="ECO:0007669"/>
    <property type="project" value="UniProtKB-KW"/>
</dbReference>
<dbReference type="CDD" id="cd01335">
    <property type="entry name" value="Radical_SAM"/>
    <property type="match status" value="1"/>
</dbReference>
<dbReference type="FunFam" id="3.20.20.70:FF:000023">
    <property type="entry name" value="Lipoyl synthase"/>
    <property type="match status" value="1"/>
</dbReference>
<dbReference type="Gene3D" id="3.20.20.70">
    <property type="entry name" value="Aldolase class I"/>
    <property type="match status" value="1"/>
</dbReference>
<dbReference type="HAMAP" id="MF_00206">
    <property type="entry name" value="Lipoyl_synth"/>
    <property type="match status" value="1"/>
</dbReference>
<dbReference type="InterPro" id="IPR013785">
    <property type="entry name" value="Aldolase_TIM"/>
</dbReference>
<dbReference type="InterPro" id="IPR006638">
    <property type="entry name" value="Elp3/MiaA/NifB-like_rSAM"/>
</dbReference>
<dbReference type="InterPro" id="IPR031691">
    <property type="entry name" value="LIAS_N"/>
</dbReference>
<dbReference type="InterPro" id="IPR003698">
    <property type="entry name" value="Lipoyl_synth"/>
</dbReference>
<dbReference type="InterPro" id="IPR007197">
    <property type="entry name" value="rSAM"/>
</dbReference>
<dbReference type="NCBIfam" id="TIGR00510">
    <property type="entry name" value="lipA"/>
    <property type="match status" value="1"/>
</dbReference>
<dbReference type="NCBIfam" id="NF004019">
    <property type="entry name" value="PRK05481.1"/>
    <property type="match status" value="1"/>
</dbReference>
<dbReference type="NCBIfam" id="NF009544">
    <property type="entry name" value="PRK12928.1"/>
    <property type="match status" value="1"/>
</dbReference>
<dbReference type="PANTHER" id="PTHR10949">
    <property type="entry name" value="LIPOYL SYNTHASE"/>
    <property type="match status" value="1"/>
</dbReference>
<dbReference type="PANTHER" id="PTHR10949:SF0">
    <property type="entry name" value="LIPOYL SYNTHASE, MITOCHONDRIAL"/>
    <property type="match status" value="1"/>
</dbReference>
<dbReference type="Pfam" id="PF16881">
    <property type="entry name" value="LIAS_N"/>
    <property type="match status" value="1"/>
</dbReference>
<dbReference type="Pfam" id="PF04055">
    <property type="entry name" value="Radical_SAM"/>
    <property type="match status" value="1"/>
</dbReference>
<dbReference type="PIRSF" id="PIRSF005963">
    <property type="entry name" value="Lipoyl_synth"/>
    <property type="match status" value="1"/>
</dbReference>
<dbReference type="SFLD" id="SFLDF00271">
    <property type="entry name" value="lipoyl_synthase"/>
    <property type="match status" value="1"/>
</dbReference>
<dbReference type="SFLD" id="SFLDG01058">
    <property type="entry name" value="lipoyl_synthase_like"/>
    <property type="match status" value="1"/>
</dbReference>
<dbReference type="SMART" id="SM00729">
    <property type="entry name" value="Elp3"/>
    <property type="match status" value="1"/>
</dbReference>
<dbReference type="SUPFAM" id="SSF102114">
    <property type="entry name" value="Radical SAM enzymes"/>
    <property type="match status" value="1"/>
</dbReference>
<dbReference type="PROSITE" id="PS51918">
    <property type="entry name" value="RADICAL_SAM"/>
    <property type="match status" value="1"/>
</dbReference>
<reference key="1">
    <citation type="journal article" date="2008" name="BMC Genomics">
        <title>The genome sequence of the fish pathogen Aliivibrio salmonicida strain LFI1238 shows extensive evidence of gene decay.</title>
        <authorList>
            <person name="Hjerde E."/>
            <person name="Lorentzen M.S."/>
            <person name="Holden M.T."/>
            <person name="Seeger K."/>
            <person name="Paulsen S."/>
            <person name="Bason N."/>
            <person name="Churcher C."/>
            <person name="Harris D."/>
            <person name="Norbertczak H."/>
            <person name="Quail M.A."/>
            <person name="Sanders S."/>
            <person name="Thurston S."/>
            <person name="Parkhill J."/>
            <person name="Willassen N.P."/>
            <person name="Thomson N.R."/>
        </authorList>
    </citation>
    <scope>NUCLEOTIDE SEQUENCE [LARGE SCALE GENOMIC DNA]</scope>
    <source>
        <strain>LFI1238</strain>
    </source>
</reference>
<comment type="function">
    <text evidence="1">Catalyzes the radical-mediated insertion of two sulfur atoms into the C-6 and C-8 positions of the octanoyl moiety bound to the lipoyl domains of lipoate-dependent enzymes, thereby converting the octanoylated domains into lipoylated derivatives.</text>
</comment>
<comment type="catalytic activity">
    <reaction evidence="1">
        <text>[[Fe-S] cluster scaffold protein carrying a second [4Fe-4S](2+) cluster] + N(6)-octanoyl-L-lysyl-[protein] + 2 oxidized [2Fe-2S]-[ferredoxin] + 2 S-adenosyl-L-methionine + 4 H(+) = [[Fe-S] cluster scaffold protein] + N(6)-[(R)-dihydrolipoyl]-L-lysyl-[protein] + 4 Fe(3+) + 2 hydrogen sulfide + 2 5'-deoxyadenosine + 2 L-methionine + 2 reduced [2Fe-2S]-[ferredoxin]</text>
        <dbReference type="Rhea" id="RHEA:16585"/>
        <dbReference type="Rhea" id="RHEA-COMP:9928"/>
        <dbReference type="Rhea" id="RHEA-COMP:10000"/>
        <dbReference type="Rhea" id="RHEA-COMP:10001"/>
        <dbReference type="Rhea" id="RHEA-COMP:10475"/>
        <dbReference type="Rhea" id="RHEA-COMP:14568"/>
        <dbReference type="Rhea" id="RHEA-COMP:14569"/>
        <dbReference type="ChEBI" id="CHEBI:15378"/>
        <dbReference type="ChEBI" id="CHEBI:17319"/>
        <dbReference type="ChEBI" id="CHEBI:29034"/>
        <dbReference type="ChEBI" id="CHEBI:29919"/>
        <dbReference type="ChEBI" id="CHEBI:33722"/>
        <dbReference type="ChEBI" id="CHEBI:33737"/>
        <dbReference type="ChEBI" id="CHEBI:33738"/>
        <dbReference type="ChEBI" id="CHEBI:57844"/>
        <dbReference type="ChEBI" id="CHEBI:59789"/>
        <dbReference type="ChEBI" id="CHEBI:78809"/>
        <dbReference type="ChEBI" id="CHEBI:83100"/>
        <dbReference type="EC" id="2.8.1.8"/>
    </reaction>
</comment>
<comment type="cofactor">
    <cofactor evidence="1">
        <name>[4Fe-4S] cluster</name>
        <dbReference type="ChEBI" id="CHEBI:49883"/>
    </cofactor>
    <text evidence="1">Binds 2 [4Fe-4S] clusters per subunit. One cluster is coordinated with 3 cysteines and an exchangeable S-adenosyl-L-methionine.</text>
</comment>
<comment type="pathway">
    <text evidence="1">Protein modification; protein lipoylation via endogenous pathway; protein N(6)-(lipoyl)lysine from octanoyl-[acyl-carrier-protein]: step 2/2.</text>
</comment>
<comment type="subcellular location">
    <subcellularLocation>
        <location evidence="1">Cytoplasm</location>
    </subcellularLocation>
</comment>
<comment type="similarity">
    <text evidence="1">Belongs to the radical SAM superfamily. Lipoyl synthase family.</text>
</comment>
<organism>
    <name type="scientific">Aliivibrio salmonicida (strain LFI1238)</name>
    <name type="common">Vibrio salmonicida (strain LFI1238)</name>
    <dbReference type="NCBI Taxonomy" id="316275"/>
    <lineage>
        <taxon>Bacteria</taxon>
        <taxon>Pseudomonadati</taxon>
        <taxon>Pseudomonadota</taxon>
        <taxon>Gammaproteobacteria</taxon>
        <taxon>Vibrionales</taxon>
        <taxon>Vibrionaceae</taxon>
        <taxon>Aliivibrio</taxon>
    </lineage>
</organism>
<sequence length="321" mass="36437">MSKPIQMEKGVKYRDADKMALIPVKNMPTEKKEVLRKPEWMKIKLPSSSKRIDEIKSAMRKNNLHSVCEEASCPNLAECFNHGTATFMILGAICTRRCPFCDVAHGRPVTPEAEEPKKLAKTIKDMKLKYVVITSVDRDDLRDGGAQHFADCNREIRELNPEIRIETLVPDFRGRMDRALDAMHSNPPDVFNHNLETAPRLYRKVRPGANYQWSLDLLKKFKEQHPTVPTKSGVMMGLGETKEEIVEVLKDLRAHGVTMLTLGQYLAPSRHHLPVERYVPPAEFDELKVIALELGFTHAACGPFVRSSYHADLQAKGEEVK</sequence>
<gene>
    <name evidence="1" type="primary">lipA</name>
    <name type="ordered locus">VSAL_I0979</name>
</gene>
<proteinExistence type="inferred from homology"/>
<keyword id="KW-0004">4Fe-4S</keyword>
<keyword id="KW-0963">Cytoplasm</keyword>
<keyword id="KW-0408">Iron</keyword>
<keyword id="KW-0411">Iron-sulfur</keyword>
<keyword id="KW-0479">Metal-binding</keyword>
<keyword id="KW-0949">S-adenosyl-L-methionine</keyword>
<keyword id="KW-0808">Transferase</keyword>
<name>LIPA_ALISL</name>
<accession>B6EIF3</accession>
<evidence type="ECO:0000255" key="1">
    <source>
        <dbReference type="HAMAP-Rule" id="MF_00206"/>
    </source>
</evidence>
<evidence type="ECO:0000255" key="2">
    <source>
        <dbReference type="PROSITE-ProRule" id="PRU01266"/>
    </source>
</evidence>